<organismHost>
    <name type="scientific">Aedes</name>
    <dbReference type="NCBI Taxonomy" id="7158"/>
</organismHost>
<organismHost>
    <name type="scientific">Bos taurus</name>
    <name type="common">Bovine</name>
    <dbReference type="NCBI Taxonomy" id="9913"/>
</organismHost>
<organismHost>
    <name type="scientific">Canis lupus familiaris</name>
    <name type="common">Dog</name>
    <name type="synonym">Canis familiaris</name>
    <dbReference type="NCBI Taxonomy" id="9615"/>
</organismHost>
<organismHost>
    <name type="scientific">Culex</name>
    <dbReference type="NCBI Taxonomy" id="7174"/>
</organismHost>
<organismHost>
    <name type="scientific">Culiseta</name>
    <dbReference type="NCBI Taxonomy" id="174825"/>
</organismHost>
<organismHost>
    <name type="scientific">Equus caballus</name>
    <name type="common">Horse</name>
    <dbReference type="NCBI Taxonomy" id="9796"/>
</organismHost>
<organismHost>
    <name type="scientific">Gallus gallus</name>
    <name type="common">Chicken</name>
    <dbReference type="NCBI Taxonomy" id="9031"/>
</organismHost>
<organismHost>
    <name type="scientific">Homo sapiens</name>
    <name type="common">Human</name>
    <dbReference type="NCBI Taxonomy" id="9606"/>
</organismHost>
<organismHost>
    <name type="scientific">Lepus americanus</name>
    <name type="common">Snowshoe hare</name>
    <dbReference type="NCBI Taxonomy" id="48086"/>
</organismHost>
<name>NCAP_BUNSH</name>
<keyword id="KW-0024">Alternative initiation</keyword>
<keyword id="KW-0167">Capsid protein</keyword>
<keyword id="KW-1262">Eukaryotic host gene expression shutoff by virus</keyword>
<keyword id="KW-1193">Eukaryotic host translation shutoff by virus</keyword>
<keyword id="KW-1139">Helical capsid protein</keyword>
<keyword id="KW-1190">Host gene expression shutoff by virus</keyword>
<keyword id="KW-0945">Host-virus interaction</keyword>
<keyword id="KW-0687">Ribonucleoprotein</keyword>
<keyword id="KW-0694">RNA-binding</keyword>
<keyword id="KW-0543">Viral nucleoprotein</keyword>
<keyword id="KW-0946">Virion</keyword>
<feature type="chain" id="PRO_0000221991" description="Nucleoprotein">
    <location>
        <begin position="1"/>
        <end position="235"/>
    </location>
</feature>
<feature type="binding site" evidence="2">
    <location>
        <position position="18"/>
    </location>
    <ligand>
        <name>RNA</name>
        <dbReference type="ChEBI" id="CHEBI:33697"/>
    </ligand>
</feature>
<feature type="binding site" evidence="1">
    <location>
        <position position="47"/>
    </location>
    <ligand>
        <name>RNA</name>
        <dbReference type="ChEBI" id="CHEBI:33697"/>
    </ligand>
</feature>
<feature type="binding site" evidence="2">
    <location>
        <position position="50"/>
    </location>
    <ligand>
        <name>RNA</name>
        <dbReference type="ChEBI" id="CHEBI:33697"/>
    </ligand>
</feature>
<feature type="binding site" evidence="1">
    <location>
        <position position="75"/>
    </location>
    <ligand>
        <name>RNA</name>
        <dbReference type="ChEBI" id="CHEBI:33697"/>
    </ligand>
</feature>
<feature type="binding site" evidence="1">
    <location>
        <position position="76"/>
    </location>
    <ligand>
        <name>RNA</name>
        <dbReference type="ChEBI" id="CHEBI:33697"/>
    </ligand>
</feature>
<feature type="binding site" evidence="1">
    <location>
        <position position="81"/>
    </location>
    <ligand>
        <name>RNA</name>
        <dbReference type="ChEBI" id="CHEBI:33697"/>
    </ligand>
</feature>
<feature type="binding site" evidence="2">
    <location>
        <position position="94"/>
    </location>
    <ligand>
        <name>RNA</name>
        <dbReference type="ChEBI" id="CHEBI:33697"/>
    </ligand>
</feature>
<feature type="binding site" evidence="1">
    <location>
        <position position="124"/>
    </location>
    <ligand>
        <name>RNA</name>
        <dbReference type="ChEBI" id="CHEBI:33697"/>
    </ligand>
</feature>
<feature type="binding site" evidence="1">
    <location>
        <position position="126"/>
    </location>
    <ligand>
        <name>RNA</name>
        <dbReference type="ChEBI" id="CHEBI:33697"/>
    </ligand>
</feature>
<feature type="binding site" evidence="1">
    <location>
        <position position="129"/>
    </location>
    <ligand>
        <name>RNA</name>
        <dbReference type="ChEBI" id="CHEBI:33697"/>
    </ligand>
</feature>
<feature type="binding site" evidence="1">
    <location>
        <position position="167"/>
    </location>
    <ligand>
        <name>RNA</name>
        <dbReference type="ChEBI" id="CHEBI:33697"/>
    </ligand>
</feature>
<feature type="binding site" evidence="2">
    <location>
        <position position="177"/>
    </location>
    <ligand>
        <name>RNA</name>
        <dbReference type="ChEBI" id="CHEBI:33697"/>
    </ligand>
</feature>
<feature type="binding site" evidence="2">
    <location>
        <position position="183"/>
    </location>
    <ligand>
        <name>RNA</name>
        <dbReference type="ChEBI" id="CHEBI:33697"/>
    </ligand>
</feature>
<feature type="binding site" evidence="2">
    <location>
        <position position="184"/>
    </location>
    <ligand>
        <name>RNA</name>
        <dbReference type="ChEBI" id="CHEBI:33697"/>
    </ligand>
</feature>
<feature type="binding site" evidence="2">
    <location>
        <position position="185"/>
    </location>
    <ligand>
        <name>RNA</name>
        <dbReference type="ChEBI" id="CHEBI:33697"/>
    </ligand>
</feature>
<dbReference type="EMBL" id="J02390">
    <property type="status" value="NOT_ANNOTATED_CDS"/>
    <property type="molecule type" value="Genomic_RNA"/>
</dbReference>
<dbReference type="PIR" id="A04103">
    <property type="entry name" value="VHVUNH"/>
</dbReference>
<dbReference type="RefSeq" id="YP_010085082.1">
    <molecule id="P03513-1"/>
    <property type="nucleotide sequence ID" value="NC_055198.1"/>
</dbReference>
<dbReference type="SMR" id="P03513"/>
<dbReference type="IntAct" id="P03513">
    <property type="interactions" value="3"/>
</dbReference>
<dbReference type="GeneID" id="65100132"/>
<dbReference type="GO" id="GO:0019029">
    <property type="term" value="C:helical viral capsid"/>
    <property type="evidence" value="ECO:0007669"/>
    <property type="project" value="UniProtKB-KW"/>
</dbReference>
<dbReference type="GO" id="GO:1990904">
    <property type="term" value="C:ribonucleoprotein complex"/>
    <property type="evidence" value="ECO:0007669"/>
    <property type="project" value="UniProtKB-KW"/>
</dbReference>
<dbReference type="GO" id="GO:0019013">
    <property type="term" value="C:viral nucleocapsid"/>
    <property type="evidence" value="ECO:0007669"/>
    <property type="project" value="UniProtKB-KW"/>
</dbReference>
<dbReference type="GO" id="GO:0003723">
    <property type="term" value="F:RNA binding"/>
    <property type="evidence" value="ECO:0007669"/>
    <property type="project" value="UniProtKB-KW"/>
</dbReference>
<dbReference type="GO" id="GO:0039657">
    <property type="term" value="P:symbiont-mediated suppression of host gene expression"/>
    <property type="evidence" value="ECO:0007669"/>
    <property type="project" value="UniProtKB-KW"/>
</dbReference>
<dbReference type="Gene3D" id="1.20.142.20">
    <property type="match status" value="1"/>
</dbReference>
<dbReference type="Gene3D" id="1.10.472.180">
    <property type="entry name" value="Bunyavirus nucleocapsid (N) protein, C-terminal domain"/>
    <property type="match status" value="1"/>
</dbReference>
<dbReference type="InterPro" id="IPR001784">
    <property type="entry name" value="Bunya_nucleocap"/>
</dbReference>
<dbReference type="InterPro" id="IPR043011">
    <property type="entry name" value="Bunya_nucleocap_C"/>
</dbReference>
<dbReference type="InterPro" id="IPR043012">
    <property type="entry name" value="Bunya_nucleocap_N"/>
</dbReference>
<dbReference type="Pfam" id="PF00952">
    <property type="entry name" value="Bunya_nucleocap"/>
    <property type="match status" value="1"/>
</dbReference>
<dbReference type="PIRSF" id="PIRSF003947">
    <property type="entry name" value="N_OrthobunV"/>
    <property type="match status" value="1"/>
</dbReference>
<organism>
    <name type="scientific">Bunyavirus snowshoe hare</name>
    <dbReference type="NCBI Taxonomy" id="11580"/>
    <lineage>
        <taxon>Viruses</taxon>
        <taxon>Riboviria</taxon>
        <taxon>Orthornavirae</taxon>
        <taxon>Negarnaviricota</taxon>
        <taxon>Polyploviricotina</taxon>
        <taxon>Ellioviricetes</taxon>
        <taxon>Bunyavirales</taxon>
        <taxon>Peribunyaviridae</taxon>
        <taxon>Orthobunyavirus</taxon>
        <taxon>Orthobunyavirus khatangaense</taxon>
    </lineage>
</organism>
<accession>P03513</accession>
<gene>
    <name type="primary">N</name>
</gene>
<reference key="1">
    <citation type="journal article" date="1982" name="Nucleic Acids Res.">
        <title>The complete sequence and coding content of snowshoe hare bunyavirus small (S) viral RNA species.</title>
        <authorList>
            <person name="Bishop D.H.L."/>
            <person name="Gould K.G."/>
            <person name="Akashi H."/>
            <person name="Clerx-Van Haaster C.M."/>
        </authorList>
    </citation>
    <scope>NUCLEOTIDE SEQUENCE [GENOMIC RNA]</scope>
</reference>
<sequence length="235" mass="26771">MSDLVFYDVASTGANGFDPDAGYMAFCVKYAESVNLAAVRIFFLNAAKAKAALSRKPERKANPKFGEWQVEVVNNHFPGNRNNPINSDDLTIHRLSGYLARWVLEQYKENEDESRRELIKTTIINPIAESNGVRWDSGAEIYLSFFPGTEMFLETFKFYPLTIGIYRVKQGMMDPQYLKKALRQRYGSLTADKWMSQKVTAIAKSLKEVEQLKWGRGGLSDTARSFLQKFGIRLP</sequence>
<protein>
    <recommendedName>
        <fullName>Nucleoprotein</fullName>
    </recommendedName>
    <alternativeName>
        <fullName>Nucleocapsid protein</fullName>
        <shortName>Protein N</shortName>
    </alternativeName>
</protein>
<proteinExistence type="inferred from homology"/>
<comment type="function">
    <text evidence="2">Encapsidates the genome protecting it from nucleases. The encapsidated genomic RNA is termed the nucleocapsid (NC) and serves as template for transcription and replication. The NC have a helical organization. Seems to participate in the nuclear relocalization of host PABP1, thereby inhibiting host cellular translation.</text>
</comment>
<comment type="subunit">
    <text evidence="2">Homotetramer. Binds the viral genomic RNA. Interacts with host PABP1.</text>
</comment>
<comment type="subcellular location">
    <subcellularLocation>
        <location evidence="2">Virion</location>
    </subcellularLocation>
    <text evidence="2">Located inside the virion, complexed with the viral RNA.</text>
</comment>
<comment type="alternative products">
    <event type="alternative initiation"/>
    <isoform>
        <id>P03513-1</id>
        <name>N</name>
        <sequence type="displayed"/>
    </isoform>
    <isoform>
        <id>P03514-1</id>
        <name>NSS</name>
        <sequence type="external"/>
    </isoform>
</comment>
<comment type="domain">
    <text evidence="2">The N-terminus and C-terminus are involved in homooligomerization and play an essential role in viral RNA synthesis.</text>
</comment>
<comment type="similarity">
    <text evidence="3">Belongs to the orthobunyavirus nucleocapsid protein family.</text>
</comment>
<evidence type="ECO:0000250" key="1">
    <source>
        <dbReference type="UniProtKB" id="P04873"/>
    </source>
</evidence>
<evidence type="ECO:0000250" key="2">
    <source>
        <dbReference type="UniProtKB" id="P16495"/>
    </source>
</evidence>
<evidence type="ECO:0000305" key="3"/>